<reference key="1">
    <citation type="journal article" date="2010" name="Genome Biol. Evol.">
        <title>Continuing evolution of Burkholderia mallei through genome reduction and large-scale rearrangements.</title>
        <authorList>
            <person name="Losada L."/>
            <person name="Ronning C.M."/>
            <person name="DeShazer D."/>
            <person name="Woods D."/>
            <person name="Fedorova N."/>
            <person name="Kim H.S."/>
            <person name="Shabalina S.A."/>
            <person name="Pearson T.R."/>
            <person name="Brinkac L."/>
            <person name="Tan P."/>
            <person name="Nandi T."/>
            <person name="Crabtree J."/>
            <person name="Badger J."/>
            <person name="Beckstrom-Sternberg S."/>
            <person name="Saqib M."/>
            <person name="Schutzer S.E."/>
            <person name="Keim P."/>
            <person name="Nierman W.C."/>
        </authorList>
    </citation>
    <scope>NUCLEOTIDE SEQUENCE [LARGE SCALE GENOMIC DNA]</scope>
    <source>
        <strain>NCTC 10229</strain>
    </source>
</reference>
<proteinExistence type="inferred from homology"/>
<dbReference type="EMBL" id="CP000546">
    <property type="protein sequence ID" value="ABN00811.1"/>
    <property type="molecule type" value="Genomic_DNA"/>
</dbReference>
<dbReference type="RefSeq" id="WP_004192452.1">
    <property type="nucleotide sequence ID" value="NC_008836.1"/>
</dbReference>
<dbReference type="SMR" id="A2S2A6"/>
<dbReference type="GeneID" id="93060472"/>
<dbReference type="KEGG" id="bml:BMA10229_A0066"/>
<dbReference type="HOGENOM" id="CLU_016077_6_2_4"/>
<dbReference type="Proteomes" id="UP000002283">
    <property type="component" value="Chromosome I"/>
</dbReference>
<dbReference type="GO" id="GO:0016887">
    <property type="term" value="F:ATP hydrolysis activity"/>
    <property type="evidence" value="ECO:0007669"/>
    <property type="project" value="InterPro"/>
</dbReference>
<dbReference type="GO" id="GO:0005525">
    <property type="term" value="F:GTP binding"/>
    <property type="evidence" value="ECO:0007669"/>
    <property type="project" value="UniProtKB-UniRule"/>
</dbReference>
<dbReference type="GO" id="GO:0043022">
    <property type="term" value="F:ribosome binding"/>
    <property type="evidence" value="ECO:0007669"/>
    <property type="project" value="TreeGrafter"/>
</dbReference>
<dbReference type="GO" id="GO:0042254">
    <property type="term" value="P:ribosome biogenesis"/>
    <property type="evidence" value="ECO:0007669"/>
    <property type="project" value="UniProtKB-KW"/>
</dbReference>
<dbReference type="CDD" id="cd01894">
    <property type="entry name" value="EngA1"/>
    <property type="match status" value="1"/>
</dbReference>
<dbReference type="CDD" id="cd01895">
    <property type="entry name" value="EngA2"/>
    <property type="match status" value="1"/>
</dbReference>
<dbReference type="FunFam" id="3.30.300.20:FF:000004">
    <property type="entry name" value="GTPase Der"/>
    <property type="match status" value="1"/>
</dbReference>
<dbReference type="FunFam" id="3.40.50.300:FF:000040">
    <property type="entry name" value="GTPase Der"/>
    <property type="match status" value="1"/>
</dbReference>
<dbReference type="FunFam" id="3.40.50.300:FF:000057">
    <property type="entry name" value="GTPase Der"/>
    <property type="match status" value="1"/>
</dbReference>
<dbReference type="Gene3D" id="3.30.300.20">
    <property type="match status" value="1"/>
</dbReference>
<dbReference type="Gene3D" id="3.40.50.300">
    <property type="entry name" value="P-loop containing nucleotide triphosphate hydrolases"/>
    <property type="match status" value="2"/>
</dbReference>
<dbReference type="HAMAP" id="MF_00195">
    <property type="entry name" value="GTPase_Der"/>
    <property type="match status" value="1"/>
</dbReference>
<dbReference type="InterPro" id="IPR003593">
    <property type="entry name" value="AAA+_ATPase"/>
</dbReference>
<dbReference type="InterPro" id="IPR031166">
    <property type="entry name" value="G_ENGA"/>
</dbReference>
<dbReference type="InterPro" id="IPR006073">
    <property type="entry name" value="GTP-bd"/>
</dbReference>
<dbReference type="InterPro" id="IPR016484">
    <property type="entry name" value="GTPase_Der"/>
</dbReference>
<dbReference type="InterPro" id="IPR032859">
    <property type="entry name" value="KH_dom-like"/>
</dbReference>
<dbReference type="InterPro" id="IPR015946">
    <property type="entry name" value="KH_dom-like_a/b"/>
</dbReference>
<dbReference type="InterPro" id="IPR027417">
    <property type="entry name" value="P-loop_NTPase"/>
</dbReference>
<dbReference type="InterPro" id="IPR005225">
    <property type="entry name" value="Small_GTP-bd"/>
</dbReference>
<dbReference type="NCBIfam" id="TIGR03594">
    <property type="entry name" value="GTPase_EngA"/>
    <property type="match status" value="1"/>
</dbReference>
<dbReference type="NCBIfam" id="TIGR00231">
    <property type="entry name" value="small_GTP"/>
    <property type="match status" value="2"/>
</dbReference>
<dbReference type="PANTHER" id="PTHR43834">
    <property type="entry name" value="GTPASE DER"/>
    <property type="match status" value="1"/>
</dbReference>
<dbReference type="PANTHER" id="PTHR43834:SF6">
    <property type="entry name" value="GTPASE DER"/>
    <property type="match status" value="1"/>
</dbReference>
<dbReference type="Pfam" id="PF14714">
    <property type="entry name" value="KH_dom-like"/>
    <property type="match status" value="1"/>
</dbReference>
<dbReference type="Pfam" id="PF01926">
    <property type="entry name" value="MMR_HSR1"/>
    <property type="match status" value="2"/>
</dbReference>
<dbReference type="PIRSF" id="PIRSF006485">
    <property type="entry name" value="GTP-binding_EngA"/>
    <property type="match status" value="1"/>
</dbReference>
<dbReference type="PRINTS" id="PR00326">
    <property type="entry name" value="GTP1OBG"/>
</dbReference>
<dbReference type="SMART" id="SM00382">
    <property type="entry name" value="AAA"/>
    <property type="match status" value="2"/>
</dbReference>
<dbReference type="SUPFAM" id="SSF52540">
    <property type="entry name" value="P-loop containing nucleoside triphosphate hydrolases"/>
    <property type="match status" value="2"/>
</dbReference>
<dbReference type="PROSITE" id="PS51712">
    <property type="entry name" value="G_ENGA"/>
    <property type="match status" value="2"/>
</dbReference>
<keyword id="KW-0342">GTP-binding</keyword>
<keyword id="KW-0547">Nucleotide-binding</keyword>
<keyword id="KW-0677">Repeat</keyword>
<keyword id="KW-0690">Ribosome biogenesis</keyword>
<name>DER_BURM9</name>
<accession>A2S2A6</accession>
<sequence length="445" mass="49077">MKPVIALVGRPNVGKSTLFNRLTRSRDALVADLPGLTRDRHYGEGRVGARPYLVVDTGGFEPVAKDGILHEMARQTRQAVEEADVVVFIVDGRNGLAPQDKSIADYLRKTGRPIFLVVNKAEGMKYTAVASDFYELGLGDPRAISAAHGDGVNDMINEALEVAYAGEPQESEEAAAARGIKIAIVGRPNVGKSTLVNTLIGEDRVIAFDMPGTTRDSIYVDFERNGKHYTLIDTAGLRRRGKVFEAIEKFSVVKTLQSISDANVVILLLDARQDISDQDAHIAGFVVEQGRALVVGVNKWDGLDPHVRERTKADLARKLKFLEFAKFHFISAAEKTGIGALMRSVDDAYAAAMKKLPTPKLTRALIEAVEFQQPRRRGPVRPKLRYAHQGGQNPPIIVIHGNALDAVTETYKRYLENRFRETFSLTGTPLRIEFRSSTNPYADKD</sequence>
<protein>
    <recommendedName>
        <fullName evidence="1">GTPase Der</fullName>
    </recommendedName>
    <alternativeName>
        <fullName evidence="1">GTP-binding protein EngA</fullName>
    </alternativeName>
</protein>
<gene>
    <name evidence="1" type="primary">der</name>
    <name type="synonym">engA</name>
    <name type="ordered locus">BMA10229_A0066</name>
</gene>
<comment type="function">
    <text evidence="1">GTPase that plays an essential role in the late steps of ribosome biogenesis.</text>
</comment>
<comment type="subunit">
    <text evidence="1">Associates with the 50S ribosomal subunit.</text>
</comment>
<comment type="similarity">
    <text evidence="1">Belongs to the TRAFAC class TrmE-Era-EngA-EngB-Septin-like GTPase superfamily. EngA (Der) GTPase family.</text>
</comment>
<feature type="chain" id="PRO_1000011582" description="GTPase Der">
    <location>
        <begin position="1"/>
        <end position="445"/>
    </location>
</feature>
<feature type="domain" description="EngA-type G 1">
    <location>
        <begin position="3"/>
        <end position="167"/>
    </location>
</feature>
<feature type="domain" description="EngA-type G 2">
    <location>
        <begin position="180"/>
        <end position="353"/>
    </location>
</feature>
<feature type="domain" description="KH-like" evidence="1">
    <location>
        <begin position="354"/>
        <end position="438"/>
    </location>
</feature>
<feature type="binding site" evidence="1">
    <location>
        <begin position="9"/>
        <end position="16"/>
    </location>
    <ligand>
        <name>GTP</name>
        <dbReference type="ChEBI" id="CHEBI:37565"/>
        <label>1</label>
    </ligand>
</feature>
<feature type="binding site" evidence="1">
    <location>
        <begin position="56"/>
        <end position="60"/>
    </location>
    <ligand>
        <name>GTP</name>
        <dbReference type="ChEBI" id="CHEBI:37565"/>
        <label>1</label>
    </ligand>
</feature>
<feature type="binding site" evidence="1">
    <location>
        <begin position="119"/>
        <end position="122"/>
    </location>
    <ligand>
        <name>GTP</name>
        <dbReference type="ChEBI" id="CHEBI:37565"/>
        <label>1</label>
    </ligand>
</feature>
<feature type="binding site" evidence="1">
    <location>
        <begin position="186"/>
        <end position="193"/>
    </location>
    <ligand>
        <name>GTP</name>
        <dbReference type="ChEBI" id="CHEBI:37565"/>
        <label>2</label>
    </ligand>
</feature>
<feature type="binding site" evidence="1">
    <location>
        <begin position="233"/>
        <end position="237"/>
    </location>
    <ligand>
        <name>GTP</name>
        <dbReference type="ChEBI" id="CHEBI:37565"/>
        <label>2</label>
    </ligand>
</feature>
<feature type="binding site" evidence="1">
    <location>
        <begin position="298"/>
        <end position="301"/>
    </location>
    <ligand>
        <name>GTP</name>
        <dbReference type="ChEBI" id="CHEBI:37565"/>
        <label>2</label>
    </ligand>
</feature>
<organism>
    <name type="scientific">Burkholderia mallei (strain NCTC 10229)</name>
    <dbReference type="NCBI Taxonomy" id="412022"/>
    <lineage>
        <taxon>Bacteria</taxon>
        <taxon>Pseudomonadati</taxon>
        <taxon>Pseudomonadota</taxon>
        <taxon>Betaproteobacteria</taxon>
        <taxon>Burkholderiales</taxon>
        <taxon>Burkholderiaceae</taxon>
        <taxon>Burkholderia</taxon>
        <taxon>pseudomallei group</taxon>
    </lineage>
</organism>
<evidence type="ECO:0000255" key="1">
    <source>
        <dbReference type="HAMAP-Rule" id="MF_00195"/>
    </source>
</evidence>